<keyword id="KW-0229">DNA integration</keyword>
<keyword id="KW-0233">DNA recombination</keyword>
<keyword id="KW-0238">DNA-binding</keyword>
<keyword id="KW-0378">Hydrolase</keyword>
<keyword id="KW-1185">Reference proteome</keyword>
<keyword id="KW-0808">Transferase</keyword>
<keyword id="KW-1179">Viral genome integration</keyword>
<keyword id="KW-1160">Virus entry into host cell</keyword>
<gene>
    <name type="primary">int</name>
</gene>
<comment type="function">
    <text>Integrase is necessary for integration of the phage into the host genome by site-specific recombination. In conjunction with excisionase, integrase is also necessary for excision of the prophage from the host genome.</text>
</comment>
<comment type="similarity">
    <text evidence="4">Belongs to the 'phage' integrase family.</text>
</comment>
<feature type="chain" id="PRO_0000197521" description="Integrase">
    <location>
        <begin position="1"/>
        <end position="387"/>
    </location>
</feature>
<feature type="domain" description="Core-binding (CB)" evidence="3">
    <location>
        <begin position="57"/>
        <end position="161"/>
    </location>
</feature>
<feature type="domain" description="Tyr recombinase" evidence="2">
    <location>
        <begin position="181"/>
        <end position="362"/>
    </location>
</feature>
<feature type="active site" evidence="2">
    <location>
        <position position="215"/>
    </location>
</feature>
<feature type="active site" evidence="2">
    <location>
        <position position="242"/>
    </location>
</feature>
<feature type="active site" evidence="2">
    <location>
        <position position="314"/>
    </location>
</feature>
<feature type="active site" evidence="2">
    <location>
        <position position="317"/>
    </location>
</feature>
<feature type="active site" evidence="2">
    <location>
        <position position="340"/>
    </location>
</feature>
<feature type="active site" description="O-(3'-phospho-DNA)-tyrosine intermediate" evidence="2">
    <location>
        <position position="349"/>
    </location>
</feature>
<sequence>MSLFRRGETWYASFTLPNGKRFKQSLGTKDKRQATELHDKLKAEAWRVSKLGETPDMTFEGACVRWLEEKAHKKSLDDDKSRIGFWLQHFAGMQLKDITETKIYSAIQKITNRRHEENWKLMDEACRKNGKQPPVFKPKPAAVATKATHLSFIKALLRAAEREWKMLDKAPIIKVPQPKNKRIRWLEPHEAKRLIDECQEPLKSVVEFALSTGLRRSNIINLEWQQIDMQRKVAWIHPEQSKSNHAIGVALNDTACRVLKKQIGNHHKWVFVYKESSTKPDGTKSPVVRKMRYDANTAWRAALKRAGIEDFRFHDLRHTWASWLVQAGVPISVLQEMGGWESIEMVRRYAHLAPNHLTEHARQIDSIFGTSVPNMSHSKNKEGTNNT</sequence>
<organismHost>
    <name type="scientific">Salmonella typhimurium</name>
    <dbReference type="NCBI Taxonomy" id="90371"/>
</organismHost>
<dbReference type="EC" id="2.7.7.-" evidence="1"/>
<dbReference type="EC" id="3.1.-.-" evidence="1"/>
<dbReference type="EMBL" id="X04052">
    <property type="protein sequence ID" value="CAA27685.1"/>
    <property type="molecule type" value="Genomic_DNA"/>
</dbReference>
<dbReference type="EMBL" id="AF217253">
    <property type="protein sequence ID" value="AAF75002.1"/>
    <property type="molecule type" value="Genomic_DNA"/>
</dbReference>
<dbReference type="EMBL" id="BK000583">
    <property type="protein sequence ID" value="DAA00998.1"/>
    <property type="molecule type" value="Genomic_DNA"/>
</dbReference>
<dbReference type="PIR" id="C24253">
    <property type="entry name" value="RSBPIP"/>
</dbReference>
<dbReference type="RefSeq" id="NP_059584.1">
    <property type="nucleotide sequence ID" value="NC_002371.2"/>
</dbReference>
<dbReference type="SMR" id="P04890"/>
<dbReference type="GeneID" id="1262851"/>
<dbReference type="KEGG" id="vg:1262851"/>
<dbReference type="OrthoDB" id="3956at10239"/>
<dbReference type="Proteomes" id="UP000001795">
    <property type="component" value="Segment"/>
</dbReference>
<dbReference type="Proteomes" id="UP000007960">
    <property type="component" value="Segment"/>
</dbReference>
<dbReference type="GO" id="GO:0003677">
    <property type="term" value="F:DNA binding"/>
    <property type="evidence" value="ECO:0007669"/>
    <property type="project" value="UniProtKB-KW"/>
</dbReference>
<dbReference type="GO" id="GO:0016787">
    <property type="term" value="F:hydrolase activity"/>
    <property type="evidence" value="ECO:0007669"/>
    <property type="project" value="UniProtKB-KW"/>
</dbReference>
<dbReference type="GO" id="GO:0016740">
    <property type="term" value="F:transferase activity"/>
    <property type="evidence" value="ECO:0007669"/>
    <property type="project" value="UniProtKB-KW"/>
</dbReference>
<dbReference type="GO" id="GO:0015074">
    <property type="term" value="P:DNA integration"/>
    <property type="evidence" value="ECO:0007669"/>
    <property type="project" value="UniProtKB-KW"/>
</dbReference>
<dbReference type="GO" id="GO:0006310">
    <property type="term" value="P:DNA recombination"/>
    <property type="evidence" value="ECO:0007669"/>
    <property type="project" value="UniProtKB-KW"/>
</dbReference>
<dbReference type="GO" id="GO:0075713">
    <property type="term" value="P:establishment of integrated proviral latency"/>
    <property type="evidence" value="ECO:0007669"/>
    <property type="project" value="UniProtKB-KW"/>
</dbReference>
<dbReference type="GO" id="GO:0046718">
    <property type="term" value="P:symbiont entry into host cell"/>
    <property type="evidence" value="ECO:0007669"/>
    <property type="project" value="UniProtKB-KW"/>
</dbReference>
<dbReference type="GO" id="GO:0044826">
    <property type="term" value="P:viral genome integration into host DNA"/>
    <property type="evidence" value="ECO:0007669"/>
    <property type="project" value="UniProtKB-KW"/>
</dbReference>
<dbReference type="CDD" id="cd00796">
    <property type="entry name" value="INT_Rci_Hp1_C"/>
    <property type="match status" value="1"/>
</dbReference>
<dbReference type="Gene3D" id="1.10.150.130">
    <property type="match status" value="1"/>
</dbReference>
<dbReference type="Gene3D" id="1.10.443.10">
    <property type="entry name" value="Intergrase catalytic core"/>
    <property type="match status" value="1"/>
</dbReference>
<dbReference type="InterPro" id="IPR044068">
    <property type="entry name" value="CB"/>
</dbReference>
<dbReference type="InterPro" id="IPR011010">
    <property type="entry name" value="DNA_brk_join_enz"/>
</dbReference>
<dbReference type="InterPro" id="IPR013762">
    <property type="entry name" value="Integrase-like_cat_sf"/>
</dbReference>
<dbReference type="InterPro" id="IPR002104">
    <property type="entry name" value="Integrase_catalytic"/>
</dbReference>
<dbReference type="InterPro" id="IPR010998">
    <property type="entry name" value="Integrase_recombinase_N"/>
</dbReference>
<dbReference type="InterPro" id="IPR050090">
    <property type="entry name" value="Tyrosine_recombinase_XerCD"/>
</dbReference>
<dbReference type="PANTHER" id="PTHR30349">
    <property type="entry name" value="PHAGE INTEGRASE-RELATED"/>
    <property type="match status" value="1"/>
</dbReference>
<dbReference type="PANTHER" id="PTHR30349:SF64">
    <property type="entry name" value="PROPHAGE INTEGRASE INTD-RELATED"/>
    <property type="match status" value="1"/>
</dbReference>
<dbReference type="Pfam" id="PF00589">
    <property type="entry name" value="Phage_integrase"/>
    <property type="match status" value="1"/>
</dbReference>
<dbReference type="SUPFAM" id="SSF56349">
    <property type="entry name" value="DNA breaking-rejoining enzymes"/>
    <property type="match status" value="1"/>
</dbReference>
<dbReference type="PROSITE" id="PS51900">
    <property type="entry name" value="CB"/>
    <property type="match status" value="1"/>
</dbReference>
<dbReference type="PROSITE" id="PS51898">
    <property type="entry name" value="TYR_RECOMBINASE"/>
    <property type="match status" value="1"/>
</dbReference>
<reference key="1">
    <citation type="journal article" date="1986" name="J. Mol. Biol.">
        <title>Structural and regulatory divergence among site-specific recombination genes of lambdoid phage.</title>
        <authorList>
            <person name="Leong J.M."/>
            <person name="Nunes-Dueby S.E."/>
            <person name="Oser A.B."/>
            <person name="Lesser C.F."/>
            <person name="Youderian P."/>
            <person name="Susskind M.M."/>
            <person name="Landy A."/>
        </authorList>
    </citation>
    <scope>NUCLEOTIDE SEQUENCE [GENOMIC DNA]</scope>
</reference>
<reference key="2">
    <citation type="journal article" date="2000" name="J. Bacteriol.">
        <title>Sequence of the genome of Salmonella bacteriophage P22.</title>
        <authorList>
            <person name="Vander Byl C.S."/>
            <person name="Kropinski A.M.B."/>
        </authorList>
    </citation>
    <scope>NUCLEOTIDE SEQUENCE [LARGE SCALE GENOMIC DNA]</scope>
</reference>
<reference key="3">
    <citation type="journal article" date="2003" name="J. Bacteriol.">
        <title>Corrected sequence of the bacteriophage P22 genome.</title>
        <authorList>
            <person name="Pedulla M.L."/>
            <person name="Ford M.E."/>
            <person name="Karthikeyan T."/>
            <person name="Houtz J.M."/>
            <person name="Hendrix R.W."/>
            <person name="Hatfull G.F."/>
            <person name="Poteete A.R."/>
            <person name="Gilcrease E.B."/>
            <person name="Winn-Stapley D.A."/>
            <person name="Casjens S.R."/>
        </authorList>
    </citation>
    <scope>NUCLEOTIDE SEQUENCE [LARGE SCALE GENOMIC DNA]</scope>
</reference>
<evidence type="ECO:0000250" key="1">
    <source>
        <dbReference type="UniProtKB" id="P03700"/>
    </source>
</evidence>
<evidence type="ECO:0000255" key="2">
    <source>
        <dbReference type="PROSITE-ProRule" id="PRU01246"/>
    </source>
</evidence>
<evidence type="ECO:0000255" key="3">
    <source>
        <dbReference type="PROSITE-ProRule" id="PRU01248"/>
    </source>
</evidence>
<evidence type="ECO:0000305" key="4"/>
<name>VINT_BPP22</name>
<protein>
    <recommendedName>
        <fullName>Integrase</fullName>
        <ecNumber evidence="1">2.7.7.-</ecNumber>
        <ecNumber evidence="1">3.1.-.-</ecNumber>
    </recommendedName>
</protein>
<accession>P04890</accession>
<accession>Q7PCH4</accession>
<organism>
    <name type="scientific">Salmonella phage P22</name>
    <name type="common">Bacteriophage P22</name>
    <dbReference type="NCBI Taxonomy" id="10754"/>
    <lineage>
        <taxon>Viruses</taxon>
        <taxon>Duplodnaviria</taxon>
        <taxon>Heunggongvirae</taxon>
        <taxon>Uroviricota</taxon>
        <taxon>Caudoviricetes</taxon>
        <taxon>Lederbergvirus</taxon>
    </lineage>
</organism>
<proteinExistence type="inferred from homology"/>